<sequence length="298" mass="34061">MRTWIFFFLCLAGKALAAPQEALADETEVIEDLTTEGPVGANPVQVEVGEFEEPTEDVEEIVAENPCQNHHCKHGKVCEVDDNNSPMCVCQDPSSCPAHSGVFEKVCGTDNKTYDSSCHFFATKCTLEGTKKGHKLHLDYIGPCKFIPACLDTELTEFPLRMRDWLKNVLITLYERDEDNNLLTEKQKLKVKNIHENEKRLEAGDHTVELLARDFEKNYNMYIFPVHWQFGQLDQHPIDGYLSHTELAPLRAPLIPMEHCTTRFFEACDLDFDKYIALEEWASCFGIKEQDIDKDLVI</sequence>
<keyword id="KW-0084">Basement membrane</keyword>
<keyword id="KW-0106">Calcium</keyword>
<keyword id="KW-0186">Copper</keyword>
<keyword id="KW-1015">Disulfide bond</keyword>
<keyword id="KW-0272">Extracellular matrix</keyword>
<keyword id="KW-0325">Glycoprotein</keyword>
<keyword id="KW-0479">Metal-binding</keyword>
<keyword id="KW-1185">Reference proteome</keyword>
<keyword id="KW-0964">Secreted</keyword>
<keyword id="KW-0732">Signal</keyword>
<protein>
    <recommendedName>
        <fullName>SPARC</fullName>
    </recommendedName>
    <alternativeName>
        <fullName>Basement-membrane protein 40</fullName>
        <shortName>BM-40</shortName>
    </alternativeName>
    <alternativeName>
        <fullName>Osteonectin</fullName>
        <shortName>ON</shortName>
    </alternativeName>
    <alternativeName>
        <fullName>Secreted protein acidic and rich in cysteine</fullName>
    </alternativeName>
</protein>
<feature type="signal peptide" evidence="1">
    <location>
        <begin position="1"/>
        <end position="17"/>
    </location>
</feature>
<feature type="chain" id="PRO_0000020308" description="SPARC">
    <location>
        <begin position="18"/>
        <end position="298"/>
    </location>
</feature>
<feature type="domain" description="Follistatin-like">
    <location>
        <begin position="66"/>
        <end position="88"/>
    </location>
</feature>
<feature type="domain" description="Kazal-like" evidence="3">
    <location>
        <begin position="84"/>
        <end position="146"/>
    </location>
</feature>
<feature type="domain" description="EF-hand">
    <location>
        <begin position="256"/>
        <end position="291"/>
    </location>
</feature>
<feature type="binding site" evidence="1">
    <location>
        <position position="269"/>
    </location>
    <ligand>
        <name>Ca(2+)</name>
        <dbReference type="ChEBI" id="CHEBI:29108"/>
    </ligand>
</feature>
<feature type="binding site" evidence="1">
    <location>
        <position position="271"/>
    </location>
    <ligand>
        <name>Ca(2+)</name>
        <dbReference type="ChEBI" id="CHEBI:29108"/>
    </ligand>
</feature>
<feature type="binding site" evidence="1">
    <location>
        <position position="273"/>
    </location>
    <ligand>
        <name>Ca(2+)</name>
        <dbReference type="ChEBI" id="CHEBI:29108"/>
    </ligand>
</feature>
<feature type="binding site" evidence="1">
    <location>
        <position position="275"/>
    </location>
    <ligand>
        <name>Ca(2+)</name>
        <dbReference type="ChEBI" id="CHEBI:29108"/>
    </ligand>
</feature>
<feature type="binding site" evidence="1">
    <location>
        <position position="280"/>
    </location>
    <ligand>
        <name>Ca(2+)</name>
        <dbReference type="ChEBI" id="CHEBI:29108"/>
    </ligand>
</feature>
<feature type="glycosylation site" description="N-linked (GlcNAc...) asparagine" evidence="2">
    <location>
        <position position="111"/>
    </location>
</feature>
<feature type="disulfide bond" evidence="3">
    <location>
        <begin position="67"/>
        <end position="78"/>
    </location>
</feature>
<feature type="disulfide bond" evidence="3">
    <location>
        <begin position="72"/>
        <end position="88"/>
    </location>
</feature>
<feature type="disulfide bond" evidence="3">
    <location>
        <begin position="90"/>
        <end position="125"/>
    </location>
</feature>
<feature type="disulfide bond" evidence="3">
    <location>
        <begin position="96"/>
        <end position="118"/>
    </location>
</feature>
<feature type="disulfide bond" evidence="3">
    <location>
        <begin position="107"/>
        <end position="144"/>
    </location>
</feature>
<feature type="disulfide bond" evidence="3">
    <location>
        <begin position="150"/>
        <end position="260"/>
    </location>
</feature>
<feature type="disulfide bond" evidence="3">
    <location>
        <begin position="268"/>
        <end position="284"/>
    </location>
</feature>
<reference key="1">
    <citation type="journal article" date="1993" name="Eur. J. Biochem.">
        <title>Molecular analysis of chicken embryo SPARC (osteonectin).</title>
        <authorList>
            <person name="Bassuk J.A."/>
            <person name="Iruela-Arispe M.L."/>
            <person name="Lane T.L."/>
            <person name="Benson J.M."/>
            <person name="Berg R.A."/>
            <person name="Sage E.H."/>
        </authorList>
    </citation>
    <scope>NUCLEOTIDE SEQUENCE [MRNA]</scope>
    <scope>TISSUE SPECIFICITY</scope>
    <source>
        <strain>White leghorn</strain>
        <tissue>Embryo</tissue>
    </source>
</reference>
<gene>
    <name type="primary">SPARC</name>
</gene>
<evidence type="ECO:0000250" key="1"/>
<evidence type="ECO:0000255" key="2"/>
<evidence type="ECO:0000255" key="3">
    <source>
        <dbReference type="PROSITE-ProRule" id="PRU00798"/>
    </source>
</evidence>
<evidence type="ECO:0000269" key="4">
    <source>
    </source>
</evidence>
<evidence type="ECO:0000305" key="5"/>
<name>SPRC_CHICK</name>
<accession>P36377</accession>
<organism>
    <name type="scientific">Gallus gallus</name>
    <name type="common">Chicken</name>
    <dbReference type="NCBI Taxonomy" id="9031"/>
    <lineage>
        <taxon>Eukaryota</taxon>
        <taxon>Metazoa</taxon>
        <taxon>Chordata</taxon>
        <taxon>Craniata</taxon>
        <taxon>Vertebrata</taxon>
        <taxon>Euteleostomi</taxon>
        <taxon>Archelosauria</taxon>
        <taxon>Archosauria</taxon>
        <taxon>Dinosauria</taxon>
        <taxon>Saurischia</taxon>
        <taxon>Theropoda</taxon>
        <taxon>Coelurosauria</taxon>
        <taxon>Aves</taxon>
        <taxon>Neognathae</taxon>
        <taxon>Galloanserae</taxon>
        <taxon>Galliformes</taxon>
        <taxon>Phasianidae</taxon>
        <taxon>Phasianinae</taxon>
        <taxon>Gallus</taxon>
    </lineage>
</organism>
<proteinExistence type="evidence at transcript level"/>
<comment type="function">
    <text evidence="1">Appears to regulate cell growth through interactions with the extracellular matrix and cytokines. Binds calcium and copper, several types of collagen, albumin, thrombospondin, PDGF and cell membranes. There are two calcium binding sites; an acidic domain that binds 5 to 8 Ca(2+) with a low affinity and an EF-hand loop that binds a Ca(2+) ion with a high affinity (By similarity).</text>
</comment>
<comment type="subcellular location">
    <subcellularLocation>
        <location evidence="1">Secreted</location>
        <location evidence="1">Extracellular space</location>
        <location evidence="1">Extracellular matrix</location>
        <location evidence="1">Basement membrane</location>
    </subcellularLocation>
    <text evidence="1">In or around the basement membrane.</text>
</comment>
<comment type="tissue specificity">
    <text evidence="4">Detected in aorta, skeletal muscle, calvarium, vertebra, anterior limb, kidney, heart, brain, skin and lung.</text>
</comment>
<comment type="similarity">
    <text evidence="5">Belongs to the SPARC family.</text>
</comment>
<dbReference type="EMBL" id="L24906">
    <property type="protein sequence ID" value="AAA16893.1"/>
    <property type="molecule type" value="mRNA"/>
</dbReference>
<dbReference type="PIR" id="S39539">
    <property type="entry name" value="S39539"/>
</dbReference>
<dbReference type="RefSeq" id="NP_989741.1">
    <property type="nucleotide sequence ID" value="NM_204410.1"/>
</dbReference>
<dbReference type="SMR" id="P36377"/>
<dbReference type="FunCoup" id="P36377">
    <property type="interactions" value="289"/>
</dbReference>
<dbReference type="STRING" id="9031.ENSGALP00000006639"/>
<dbReference type="GlyCosmos" id="P36377">
    <property type="glycosylation" value="1 site, No reported glycans"/>
</dbReference>
<dbReference type="GlyGen" id="P36377">
    <property type="glycosylation" value="1 site"/>
</dbReference>
<dbReference type="PaxDb" id="9031-ENSGALP00000006639"/>
<dbReference type="GeneID" id="386571"/>
<dbReference type="KEGG" id="gga:386571"/>
<dbReference type="CTD" id="6678"/>
<dbReference type="VEuPathDB" id="HostDB:geneid_386571"/>
<dbReference type="eggNOG" id="KOG4004">
    <property type="taxonomic scope" value="Eukaryota"/>
</dbReference>
<dbReference type="InParanoid" id="P36377"/>
<dbReference type="OrthoDB" id="9972865at2759"/>
<dbReference type="PhylomeDB" id="P36377"/>
<dbReference type="PRO" id="PR:P36377"/>
<dbReference type="Proteomes" id="UP000000539">
    <property type="component" value="Unassembled WGS sequence"/>
</dbReference>
<dbReference type="GO" id="GO:0005604">
    <property type="term" value="C:basement membrane"/>
    <property type="evidence" value="ECO:0007669"/>
    <property type="project" value="UniProtKB-SubCell"/>
</dbReference>
<dbReference type="GO" id="GO:0005615">
    <property type="term" value="C:extracellular space"/>
    <property type="evidence" value="ECO:0000318"/>
    <property type="project" value="GO_Central"/>
</dbReference>
<dbReference type="GO" id="GO:0005509">
    <property type="term" value="F:calcium ion binding"/>
    <property type="evidence" value="ECO:0000318"/>
    <property type="project" value="GO_Central"/>
</dbReference>
<dbReference type="GO" id="GO:0005518">
    <property type="term" value="F:collagen binding"/>
    <property type="evidence" value="ECO:0000318"/>
    <property type="project" value="GO_Central"/>
</dbReference>
<dbReference type="GO" id="GO:0050840">
    <property type="term" value="F:extracellular matrix binding"/>
    <property type="evidence" value="ECO:0000318"/>
    <property type="project" value="GO_Central"/>
</dbReference>
<dbReference type="GO" id="GO:0050807">
    <property type="term" value="P:regulation of synapse organization"/>
    <property type="evidence" value="ECO:0000318"/>
    <property type="project" value="GO_Central"/>
</dbReference>
<dbReference type="GO" id="GO:0048752">
    <property type="term" value="P:semicircular canal morphogenesis"/>
    <property type="evidence" value="ECO:0000318"/>
    <property type="project" value="GO_Central"/>
</dbReference>
<dbReference type="CDD" id="cd16235">
    <property type="entry name" value="EFh_SPARC_SPARC"/>
    <property type="match status" value="1"/>
</dbReference>
<dbReference type="CDD" id="cd01328">
    <property type="entry name" value="FSL_SPARC"/>
    <property type="match status" value="1"/>
</dbReference>
<dbReference type="FunFam" id="1.10.238.10:FF:000068">
    <property type="entry name" value="SPARC isoform 1"/>
    <property type="match status" value="1"/>
</dbReference>
<dbReference type="FunFam" id="3.30.60.30:FF:000004">
    <property type="entry name" value="SPARC isoform 1"/>
    <property type="match status" value="1"/>
</dbReference>
<dbReference type="Gene3D" id="3.30.60.30">
    <property type="match status" value="1"/>
</dbReference>
<dbReference type="Gene3D" id="1.10.238.10">
    <property type="entry name" value="EF-hand"/>
    <property type="match status" value="1"/>
</dbReference>
<dbReference type="InterPro" id="IPR011992">
    <property type="entry name" value="EF-hand-dom_pair"/>
</dbReference>
<dbReference type="InterPro" id="IPR003645">
    <property type="entry name" value="Fol_N"/>
</dbReference>
<dbReference type="InterPro" id="IPR015369">
    <property type="entry name" value="Follistatin/Osteonectin_EGF"/>
</dbReference>
<dbReference type="InterPro" id="IPR002350">
    <property type="entry name" value="Kazal_dom"/>
</dbReference>
<dbReference type="InterPro" id="IPR036058">
    <property type="entry name" value="Kazal_dom_sf"/>
</dbReference>
<dbReference type="InterPro" id="IPR001999">
    <property type="entry name" value="Osteonectin_CS"/>
</dbReference>
<dbReference type="InterPro" id="IPR019577">
    <property type="entry name" value="SPARC/Testican_Ca-bd-dom"/>
</dbReference>
<dbReference type="InterPro" id="IPR037641">
    <property type="entry name" value="SPARC_FS"/>
</dbReference>
<dbReference type="PANTHER" id="PTHR13866:SF6">
    <property type="entry name" value="SPARC"/>
    <property type="match status" value="1"/>
</dbReference>
<dbReference type="PANTHER" id="PTHR13866">
    <property type="entry name" value="SPARC OSTEONECTIN"/>
    <property type="match status" value="1"/>
</dbReference>
<dbReference type="Pfam" id="PF09289">
    <property type="entry name" value="FOLN"/>
    <property type="match status" value="1"/>
</dbReference>
<dbReference type="Pfam" id="PF00050">
    <property type="entry name" value="Kazal_1"/>
    <property type="match status" value="1"/>
</dbReference>
<dbReference type="Pfam" id="PF10591">
    <property type="entry name" value="SPARC_Ca_bdg"/>
    <property type="match status" value="1"/>
</dbReference>
<dbReference type="SMART" id="SM00274">
    <property type="entry name" value="FOLN"/>
    <property type="match status" value="1"/>
</dbReference>
<dbReference type="SMART" id="SM00280">
    <property type="entry name" value="KAZAL"/>
    <property type="match status" value="1"/>
</dbReference>
<dbReference type="SUPFAM" id="SSF47473">
    <property type="entry name" value="EF-hand"/>
    <property type="match status" value="1"/>
</dbReference>
<dbReference type="SUPFAM" id="SSF57196">
    <property type="entry name" value="EGF/Laminin"/>
    <property type="match status" value="1"/>
</dbReference>
<dbReference type="SUPFAM" id="SSF100895">
    <property type="entry name" value="Kazal-type serine protease inhibitors"/>
    <property type="match status" value="1"/>
</dbReference>
<dbReference type="PROSITE" id="PS51465">
    <property type="entry name" value="KAZAL_2"/>
    <property type="match status" value="1"/>
</dbReference>
<dbReference type="PROSITE" id="PS00612">
    <property type="entry name" value="OSTEONECTIN_1"/>
    <property type="match status" value="1"/>
</dbReference>
<dbReference type="PROSITE" id="PS00613">
    <property type="entry name" value="OSTEONECTIN_2"/>
    <property type="match status" value="1"/>
</dbReference>